<organism>
    <name type="scientific">Bos taurus</name>
    <name type="common">Bovine</name>
    <dbReference type="NCBI Taxonomy" id="9913"/>
    <lineage>
        <taxon>Eukaryota</taxon>
        <taxon>Metazoa</taxon>
        <taxon>Chordata</taxon>
        <taxon>Craniata</taxon>
        <taxon>Vertebrata</taxon>
        <taxon>Euteleostomi</taxon>
        <taxon>Mammalia</taxon>
        <taxon>Eutheria</taxon>
        <taxon>Laurasiatheria</taxon>
        <taxon>Artiodactyla</taxon>
        <taxon>Ruminantia</taxon>
        <taxon>Pecora</taxon>
        <taxon>Bovidae</taxon>
        <taxon>Bovinae</taxon>
        <taxon>Bos</taxon>
    </lineage>
</organism>
<comment type="function">
    <text evidence="1">Component of the exocyst complex involved in the docking of exocytic vesicles with fusion sites on the plasma membrane.</text>
</comment>
<comment type="subunit">
    <text evidence="2 3 4">The exocyst complex is composed of EXOC1, EXOC2, EXOC3, EXOC4, EXOC5, EXOC6, EXOC7 and EXOC8. Interacts with EXOC3L1 (By similarity). Interacts with BIRC6/bruce (By similarity). Interacts with MYRIP (By similarity). Interacts with SLC6A9 (By similarity).</text>
</comment>
<comment type="subcellular location">
    <subcellularLocation>
        <location evidence="3">Cytoplasm</location>
    </subcellularLocation>
    <subcellularLocation>
        <location evidence="3">Cytoplasm</location>
        <location evidence="3">Perinuclear region</location>
    </subcellularLocation>
    <subcellularLocation>
        <location evidence="3">Cell projection</location>
        <location evidence="3">Growth cone</location>
    </subcellularLocation>
    <subcellularLocation>
        <location evidence="3">Cell projection</location>
        <location evidence="3">Neuron projection</location>
    </subcellularLocation>
    <subcellularLocation>
        <location evidence="2">Midbody</location>
    </subcellularLocation>
    <subcellularLocation>
        <location evidence="2">Golgi apparatus</location>
    </subcellularLocation>
    <text evidence="2 3">Perinuclear in undifferentiated PC12 cells. Redistributes to growing neurites and growth cones during NGF-induced neuronal differentiation (By similarity). During mitosis, early recruitment to the midbody requires RALA, but not RALB, and EXOC2. In late stages of cytokinesis, localization to the midbody is RALB-dependent (By similarity).</text>
</comment>
<comment type="similarity">
    <text evidence="5">Belongs to the SEC6 family.</text>
</comment>
<proteinExistence type="evidence at transcript level"/>
<sequence>MKETDREAVATAVQRVAGMLQRPDQLDKVEQYRRREARKKASVEARLKAAIQSQLDGVRTGLSQLHNALNDVKDIQQSLADVSKDWRQSINTIESLKDVKDAVVRHSQLAAAVENLKNIFSVPEIVRETQDLIEHGELLQAHRKLMDLECSRDGLMYEQYRMDSGNTRDMTLIHSYFGSTQGLSDELAKQLWMVLQRSLVTVRRDPTLLVSVVRIIEREEKIDRRILDRKKQTGFVPPGRPKNWKEKMFTILDRTVTTRIEGTQADTRESDRMWLVRHLEIIRKYVLDDLIVAKNLLAQCFPPHYEIFRSLLRTYHQALSARMQDLAAEDLEANEIVSLLTWVLNTYTSVEMMGNAELAPEVDVALLEPLLSADVVSALLDTYMSTLTSNIIAWLRKALETDKKDWMKETEPEADQDGYYQTTLPAIVFQMFEQNLQVAAQISEDLKTKVLVLCLQQMNSFLSRYKEEAQLYRDEHLRDRQHPHCYVQYMVAVVNNCQTFKESIVSLKRKYLKHEAEEGVSLSQPSMDGVLDAIAKEGCGSLLEEVFLDLEQHLNELMTKKWLLGSNAVDIICVTVEDYFNDFAKIKKPYRKRMIAEAHRRAVQEYLRAVMQKRISFRSAEERKDGAERMVREAEQLRFLFRKLASGFGEEMDSYCDTIVAVAEVIKLTDPSLLYLEVSTLVSKYPDIRDDHIGALLAMRGDASRDMKQTIIETLEQGPAQASPDYVPIFKDIVVPSLNVAKLLK</sequence>
<gene>
    <name type="primary">EXOC3</name>
    <name type="synonym">SEC6</name>
</gene>
<feature type="chain" id="PRO_0000327375" description="Exocyst complex component 3">
    <location>
        <begin position="1"/>
        <end position="745"/>
    </location>
</feature>
<feature type="modified residue" description="N6-acetyllysine" evidence="2">
    <location>
        <position position="28"/>
    </location>
</feature>
<accession>Q0V8C2</accession>
<name>EXOC3_BOVIN</name>
<reference key="1">
    <citation type="journal article" date="2005" name="BMC Genomics">
        <title>Characterization of 954 bovine full-CDS cDNA sequences.</title>
        <authorList>
            <person name="Harhay G.P."/>
            <person name="Sonstegard T.S."/>
            <person name="Keele J.W."/>
            <person name="Heaton M.P."/>
            <person name="Clawson M.L."/>
            <person name="Snelling W.M."/>
            <person name="Wiedmann R.T."/>
            <person name="Van Tassell C.P."/>
            <person name="Smith T.P.L."/>
        </authorList>
    </citation>
    <scope>NUCLEOTIDE SEQUENCE [LARGE SCALE MRNA]</scope>
</reference>
<dbReference type="EMBL" id="BT026297">
    <property type="protein sequence ID" value="ABG81453.1"/>
    <property type="molecule type" value="mRNA"/>
</dbReference>
<dbReference type="RefSeq" id="NP_001069068.1">
    <property type="nucleotide sequence ID" value="NM_001075600.1"/>
</dbReference>
<dbReference type="RefSeq" id="XP_005221718.1">
    <property type="nucleotide sequence ID" value="XM_005221661.5"/>
</dbReference>
<dbReference type="RefSeq" id="XP_005221719.1">
    <property type="nucleotide sequence ID" value="XM_005221662.5"/>
</dbReference>
<dbReference type="RefSeq" id="XP_005221720.1">
    <property type="nucleotide sequence ID" value="XM_005221663.5"/>
</dbReference>
<dbReference type="SMR" id="Q0V8C2"/>
<dbReference type="FunCoup" id="Q0V8C2">
    <property type="interactions" value="5551"/>
</dbReference>
<dbReference type="STRING" id="9913.ENSBTAP00000011353"/>
<dbReference type="PaxDb" id="9913-ENSBTAP00000011353"/>
<dbReference type="Ensembl" id="ENSBTAT00000011353.5">
    <property type="protein sequence ID" value="ENSBTAP00000011353.4"/>
    <property type="gene ID" value="ENSBTAG00000008606.5"/>
</dbReference>
<dbReference type="GeneID" id="513138"/>
<dbReference type="KEGG" id="bta:513138"/>
<dbReference type="CTD" id="11336"/>
<dbReference type="VEuPathDB" id="HostDB:ENSBTAG00000008606"/>
<dbReference type="VGNC" id="VGNC:28645">
    <property type="gene designation" value="EXOC3"/>
</dbReference>
<dbReference type="eggNOG" id="KOG2286">
    <property type="taxonomic scope" value="Eukaryota"/>
</dbReference>
<dbReference type="GeneTree" id="ENSGT01030000234613"/>
<dbReference type="HOGENOM" id="CLU_016260_1_0_1"/>
<dbReference type="InParanoid" id="Q0V8C2"/>
<dbReference type="OMA" id="MNIGPKT"/>
<dbReference type="OrthoDB" id="10047020at2759"/>
<dbReference type="TreeFam" id="TF314979"/>
<dbReference type="Reactome" id="R-BTA-264876">
    <property type="pathway name" value="Insulin processing"/>
</dbReference>
<dbReference type="Reactome" id="R-BTA-5620916">
    <property type="pathway name" value="VxPx cargo-targeting to cilium"/>
</dbReference>
<dbReference type="Proteomes" id="UP000009136">
    <property type="component" value="Chromosome 20"/>
</dbReference>
<dbReference type="Bgee" id="ENSBTAG00000008606">
    <property type="expression patterns" value="Expressed in retina and 106 other cell types or tissues"/>
</dbReference>
<dbReference type="GO" id="GO:0000145">
    <property type="term" value="C:exocyst"/>
    <property type="evidence" value="ECO:0000318"/>
    <property type="project" value="GO_Central"/>
</dbReference>
<dbReference type="GO" id="GO:0005794">
    <property type="term" value="C:Golgi apparatus"/>
    <property type="evidence" value="ECO:0007669"/>
    <property type="project" value="UniProtKB-SubCell"/>
</dbReference>
<dbReference type="GO" id="GO:0030426">
    <property type="term" value="C:growth cone"/>
    <property type="evidence" value="ECO:0007669"/>
    <property type="project" value="UniProtKB-SubCell"/>
</dbReference>
<dbReference type="GO" id="GO:0030496">
    <property type="term" value="C:midbody"/>
    <property type="evidence" value="ECO:0007669"/>
    <property type="project" value="UniProtKB-SubCell"/>
</dbReference>
<dbReference type="GO" id="GO:0048471">
    <property type="term" value="C:perinuclear region of cytoplasm"/>
    <property type="evidence" value="ECO:0007669"/>
    <property type="project" value="UniProtKB-SubCell"/>
</dbReference>
<dbReference type="GO" id="GO:0000149">
    <property type="term" value="F:SNARE binding"/>
    <property type="evidence" value="ECO:0000318"/>
    <property type="project" value="GO_Central"/>
</dbReference>
<dbReference type="GO" id="GO:0051601">
    <property type="term" value="P:exocyst localization"/>
    <property type="evidence" value="ECO:0000318"/>
    <property type="project" value="GO_Central"/>
</dbReference>
<dbReference type="GO" id="GO:0006887">
    <property type="term" value="P:exocytosis"/>
    <property type="evidence" value="ECO:0000318"/>
    <property type="project" value="GO_Central"/>
</dbReference>
<dbReference type="GO" id="GO:0015031">
    <property type="term" value="P:protein transport"/>
    <property type="evidence" value="ECO:0007669"/>
    <property type="project" value="UniProtKB-KW"/>
</dbReference>
<dbReference type="FunFam" id="1.10.357.50:FF:000004">
    <property type="entry name" value="Exocyst complex component 3"/>
    <property type="match status" value="1"/>
</dbReference>
<dbReference type="FunFam" id="1.10.357.70:FF:000001">
    <property type="entry name" value="Exocyst complex component 3"/>
    <property type="match status" value="1"/>
</dbReference>
<dbReference type="Gene3D" id="1.10.357.50">
    <property type="match status" value="1"/>
</dbReference>
<dbReference type="Gene3D" id="1.10.357.70">
    <property type="entry name" value="Exocyst complex component Sec6, C-terminal domain"/>
    <property type="match status" value="1"/>
</dbReference>
<dbReference type="InterPro" id="IPR010326">
    <property type="entry name" value="EXOC3/Sec6"/>
</dbReference>
<dbReference type="InterPro" id="IPR042532">
    <property type="entry name" value="EXOC3/Sec6_C"/>
</dbReference>
<dbReference type="PANTHER" id="PTHR21292:SF13">
    <property type="entry name" value="EXOCYST COMPLEX COMPONENT 3"/>
    <property type="match status" value="1"/>
</dbReference>
<dbReference type="PANTHER" id="PTHR21292">
    <property type="entry name" value="EXOCYST COMPLEX COMPONENT SEC6-RELATED"/>
    <property type="match status" value="1"/>
</dbReference>
<dbReference type="Pfam" id="PF06046">
    <property type="entry name" value="Sec6"/>
    <property type="match status" value="1"/>
</dbReference>
<protein>
    <recommendedName>
        <fullName>Exocyst complex component 3</fullName>
    </recommendedName>
    <alternativeName>
        <fullName>Exocyst complex component Sec6</fullName>
    </alternativeName>
</protein>
<keyword id="KW-0007">Acetylation</keyword>
<keyword id="KW-0966">Cell projection</keyword>
<keyword id="KW-0963">Cytoplasm</keyword>
<keyword id="KW-0268">Exocytosis</keyword>
<keyword id="KW-0333">Golgi apparatus</keyword>
<keyword id="KW-0653">Protein transport</keyword>
<keyword id="KW-1185">Reference proteome</keyword>
<keyword id="KW-0813">Transport</keyword>
<evidence type="ECO:0000250" key="1"/>
<evidence type="ECO:0000250" key="2">
    <source>
        <dbReference type="UniProtKB" id="O60645"/>
    </source>
</evidence>
<evidence type="ECO:0000250" key="3">
    <source>
        <dbReference type="UniProtKB" id="Q62825"/>
    </source>
</evidence>
<evidence type="ECO:0000250" key="4">
    <source>
        <dbReference type="UniProtKB" id="Q6KAR6"/>
    </source>
</evidence>
<evidence type="ECO:0000305" key="5"/>